<gene>
    <name type="primary">Pax8</name>
    <name type="synonym">Pax-8</name>
</gene>
<dbReference type="EMBL" id="X94246">
    <property type="protein sequence ID" value="CAA63930.1"/>
    <property type="molecule type" value="mRNA"/>
</dbReference>
<dbReference type="EMBL" id="BC081779">
    <property type="protein sequence ID" value="AAH81779.1"/>
    <property type="molecule type" value="mRNA"/>
</dbReference>
<dbReference type="RefSeq" id="NP_112403.2">
    <property type="nucleotide sequence ID" value="NM_031141.2"/>
</dbReference>
<dbReference type="BMRB" id="P51974"/>
<dbReference type="SMR" id="P51974"/>
<dbReference type="FunCoup" id="P51974">
    <property type="interactions" value="57"/>
</dbReference>
<dbReference type="IntAct" id="P51974">
    <property type="interactions" value="2"/>
</dbReference>
<dbReference type="STRING" id="10116.ENSRNOP00000033966"/>
<dbReference type="GlyGen" id="P51974">
    <property type="glycosylation" value="2 sites"/>
</dbReference>
<dbReference type="iPTMnet" id="P51974"/>
<dbReference type="PhosphoSitePlus" id="P51974"/>
<dbReference type="PaxDb" id="10116-ENSRNOP00000033966"/>
<dbReference type="Ensembl" id="ENSRNOT00000031058.7">
    <property type="protein sequence ID" value="ENSRNOP00000033966.6"/>
    <property type="gene ID" value="ENSRNOG00000026203.7"/>
</dbReference>
<dbReference type="GeneID" id="81819"/>
<dbReference type="KEGG" id="rno:81819"/>
<dbReference type="UCSC" id="RGD:620434">
    <property type="organism name" value="rat"/>
</dbReference>
<dbReference type="AGR" id="RGD:620434"/>
<dbReference type="CTD" id="7849"/>
<dbReference type="RGD" id="620434">
    <property type="gene designation" value="Pax8"/>
</dbReference>
<dbReference type="eggNOG" id="KOG3862">
    <property type="taxonomic scope" value="Eukaryota"/>
</dbReference>
<dbReference type="GeneTree" id="ENSGT00940000161868"/>
<dbReference type="HOGENOM" id="CLU_019281_4_0_1"/>
<dbReference type="InParanoid" id="P51974"/>
<dbReference type="OMA" id="CNISCYA"/>
<dbReference type="OrthoDB" id="3225452at2759"/>
<dbReference type="PhylomeDB" id="P51974"/>
<dbReference type="TreeFam" id="TF315397"/>
<dbReference type="PRO" id="PR:P51974"/>
<dbReference type="Proteomes" id="UP000002494">
    <property type="component" value="Chromosome 3"/>
</dbReference>
<dbReference type="Bgee" id="ENSRNOG00000026203">
    <property type="expression patterns" value="Expressed in kidney and 13 other cell types or tissues"/>
</dbReference>
<dbReference type="ExpressionAtlas" id="P51974">
    <property type="expression patterns" value="baseline and differential"/>
</dbReference>
<dbReference type="GO" id="GO:0005654">
    <property type="term" value="C:nucleoplasm"/>
    <property type="evidence" value="ECO:0000314"/>
    <property type="project" value="UniProtKB"/>
</dbReference>
<dbReference type="GO" id="GO:0005634">
    <property type="term" value="C:nucleus"/>
    <property type="evidence" value="ECO:0000266"/>
    <property type="project" value="RGD"/>
</dbReference>
<dbReference type="GO" id="GO:0003677">
    <property type="term" value="F:DNA binding"/>
    <property type="evidence" value="ECO:0000314"/>
    <property type="project" value="RGD"/>
</dbReference>
<dbReference type="GO" id="GO:0001228">
    <property type="term" value="F:DNA-binding transcription activator activity, RNA polymerase II-specific"/>
    <property type="evidence" value="ECO:0000314"/>
    <property type="project" value="NTNU_SB"/>
</dbReference>
<dbReference type="GO" id="GO:0003700">
    <property type="term" value="F:DNA-binding transcription factor activity"/>
    <property type="evidence" value="ECO:0000250"/>
    <property type="project" value="UniProtKB"/>
</dbReference>
<dbReference type="GO" id="GO:0000981">
    <property type="term" value="F:DNA-binding transcription factor activity, RNA polymerase II-specific"/>
    <property type="evidence" value="ECO:0000318"/>
    <property type="project" value="GO_Central"/>
</dbReference>
<dbReference type="GO" id="GO:0000978">
    <property type="term" value="F:RNA polymerase II cis-regulatory region sequence-specific DNA binding"/>
    <property type="evidence" value="ECO:0000314"/>
    <property type="project" value="NTNU_SB"/>
</dbReference>
<dbReference type="GO" id="GO:0043565">
    <property type="term" value="F:sequence-specific DNA binding"/>
    <property type="evidence" value="ECO:0000314"/>
    <property type="project" value="RGD"/>
</dbReference>
<dbReference type="GO" id="GO:1990837">
    <property type="term" value="F:sequence-specific double-stranded DNA binding"/>
    <property type="evidence" value="ECO:0000266"/>
    <property type="project" value="RGD"/>
</dbReference>
<dbReference type="GO" id="GO:0000976">
    <property type="term" value="F:transcription cis-regulatory region binding"/>
    <property type="evidence" value="ECO:0000250"/>
    <property type="project" value="UniProtKB"/>
</dbReference>
<dbReference type="GO" id="GO:0001658">
    <property type="term" value="P:branching involved in ureteric bud morphogenesis"/>
    <property type="evidence" value="ECO:0000266"/>
    <property type="project" value="RGD"/>
</dbReference>
<dbReference type="GO" id="GO:0071371">
    <property type="term" value="P:cellular response to gonadotropin stimulus"/>
    <property type="evidence" value="ECO:0000266"/>
    <property type="project" value="RGD"/>
</dbReference>
<dbReference type="GO" id="GO:0007417">
    <property type="term" value="P:central nervous system development"/>
    <property type="evidence" value="ECO:0000266"/>
    <property type="project" value="RGD"/>
</dbReference>
<dbReference type="GO" id="GO:0006351">
    <property type="term" value="P:DNA-templated transcription"/>
    <property type="evidence" value="ECO:0000266"/>
    <property type="project" value="RGD"/>
</dbReference>
<dbReference type="GO" id="GO:0030855">
    <property type="term" value="P:epithelial cell differentiation"/>
    <property type="evidence" value="ECO:0000266"/>
    <property type="project" value="RGD"/>
</dbReference>
<dbReference type="GO" id="GO:0042472">
    <property type="term" value="P:inner ear morphogenesis"/>
    <property type="evidence" value="ECO:0000266"/>
    <property type="project" value="RGD"/>
</dbReference>
<dbReference type="GO" id="GO:0001822">
    <property type="term" value="P:kidney development"/>
    <property type="evidence" value="ECO:0000266"/>
    <property type="project" value="RGD"/>
</dbReference>
<dbReference type="GO" id="GO:0072073">
    <property type="term" value="P:kidney epithelium development"/>
    <property type="evidence" value="ECO:0000266"/>
    <property type="project" value="RGD"/>
</dbReference>
<dbReference type="GO" id="GO:0003337">
    <property type="term" value="P:mesenchymal to epithelial transition involved in metanephros morphogenesis"/>
    <property type="evidence" value="ECO:0000266"/>
    <property type="project" value="RGD"/>
</dbReference>
<dbReference type="GO" id="GO:0072164">
    <property type="term" value="P:mesonephric tubule development"/>
    <property type="evidence" value="ECO:0000266"/>
    <property type="project" value="RGD"/>
</dbReference>
<dbReference type="GO" id="GO:0001823">
    <property type="term" value="P:mesonephros development"/>
    <property type="evidence" value="ECO:0000250"/>
    <property type="project" value="UniProtKB"/>
</dbReference>
<dbReference type="GO" id="GO:0072278">
    <property type="term" value="P:metanephric comma-shaped body morphogenesis"/>
    <property type="evidence" value="ECO:0000266"/>
    <property type="project" value="RGD"/>
</dbReference>
<dbReference type="GO" id="GO:0072221">
    <property type="term" value="P:metanephric distal convoluted tubule development"/>
    <property type="evidence" value="ECO:0000250"/>
    <property type="project" value="UniProtKB"/>
</dbReference>
<dbReference type="GO" id="GO:0072207">
    <property type="term" value="P:metanephric epithelium development"/>
    <property type="evidence" value="ECO:0000266"/>
    <property type="project" value="RGD"/>
</dbReference>
<dbReference type="GO" id="GO:0072289">
    <property type="term" value="P:metanephric nephron tubule formation"/>
    <property type="evidence" value="ECO:0000250"/>
    <property type="project" value="UniProtKB"/>
</dbReference>
<dbReference type="GO" id="GO:0072284">
    <property type="term" value="P:metanephric S-shaped body morphogenesis"/>
    <property type="evidence" value="ECO:0000266"/>
    <property type="project" value="RGD"/>
</dbReference>
<dbReference type="GO" id="GO:0001656">
    <property type="term" value="P:metanephros development"/>
    <property type="evidence" value="ECO:0000266"/>
    <property type="project" value="RGD"/>
</dbReference>
<dbReference type="GO" id="GO:1900215">
    <property type="term" value="P:negative regulation of apoptotic process involved in metanephric collecting duct development"/>
    <property type="evidence" value="ECO:0000250"/>
    <property type="project" value="UniProtKB"/>
</dbReference>
<dbReference type="GO" id="GO:1900218">
    <property type="term" value="P:negative regulation of apoptotic process involved in metanephric nephron tubule development"/>
    <property type="evidence" value="ECO:0000250"/>
    <property type="project" value="UniProtKB"/>
</dbReference>
<dbReference type="GO" id="GO:0010667">
    <property type="term" value="P:negative regulation of cardiac muscle cell apoptotic process"/>
    <property type="evidence" value="ECO:0000266"/>
    <property type="project" value="RGD"/>
</dbReference>
<dbReference type="GO" id="GO:0072305">
    <property type="term" value="P:negative regulation of mesenchymal cell apoptotic process involved in metanephric nephron morphogenesis"/>
    <property type="evidence" value="ECO:0000250"/>
    <property type="project" value="UniProtKB"/>
</dbReference>
<dbReference type="GO" id="GO:1900212">
    <property type="term" value="P:negative regulation of mesenchymal cell apoptotic process involved in metanephros development"/>
    <property type="evidence" value="ECO:0000250"/>
    <property type="project" value="UniProtKB"/>
</dbReference>
<dbReference type="GO" id="GO:0007399">
    <property type="term" value="P:nervous system development"/>
    <property type="evidence" value="ECO:0000318"/>
    <property type="project" value="GO_Central"/>
</dbReference>
<dbReference type="GO" id="GO:0071599">
    <property type="term" value="P:otic vesicle development"/>
    <property type="evidence" value="ECO:0000266"/>
    <property type="project" value="RGD"/>
</dbReference>
<dbReference type="GO" id="GO:0090190">
    <property type="term" value="P:positive regulation of branching involved in ureteric bud morphogenesis"/>
    <property type="evidence" value="ECO:0000250"/>
    <property type="project" value="UniProtKB"/>
</dbReference>
<dbReference type="GO" id="GO:0045893">
    <property type="term" value="P:positive regulation of DNA-templated transcription"/>
    <property type="evidence" value="ECO:0000250"/>
    <property type="project" value="UniProtKB"/>
</dbReference>
<dbReference type="GO" id="GO:0072108">
    <property type="term" value="P:positive regulation of mesenchymal to epithelial transition involved in metanephros morphogenesis"/>
    <property type="evidence" value="ECO:0000250"/>
    <property type="project" value="UniProtKB"/>
</dbReference>
<dbReference type="GO" id="GO:2000594">
    <property type="term" value="P:positive regulation of metanephric DCT cell differentiation"/>
    <property type="evidence" value="ECO:0000250"/>
    <property type="project" value="UniProtKB"/>
</dbReference>
<dbReference type="GO" id="GO:2000611">
    <property type="term" value="P:positive regulation of thyroid hormone generation"/>
    <property type="evidence" value="ECO:0000250"/>
    <property type="project" value="UniProtKB"/>
</dbReference>
<dbReference type="GO" id="GO:0045944">
    <property type="term" value="P:positive regulation of transcription by RNA polymerase II"/>
    <property type="evidence" value="ECO:0000314"/>
    <property type="project" value="NTNU_SB"/>
</dbReference>
<dbReference type="GO" id="GO:0039003">
    <property type="term" value="P:pronephric field specification"/>
    <property type="evidence" value="ECO:0000250"/>
    <property type="project" value="UniProtKB"/>
</dbReference>
<dbReference type="GO" id="GO:0048793">
    <property type="term" value="P:pronephros development"/>
    <property type="evidence" value="ECO:0000250"/>
    <property type="project" value="UniProtKB"/>
</dbReference>
<dbReference type="GO" id="GO:0042981">
    <property type="term" value="P:regulation of apoptotic process"/>
    <property type="evidence" value="ECO:0000250"/>
    <property type="project" value="UniProtKB"/>
</dbReference>
<dbReference type="GO" id="GO:0006355">
    <property type="term" value="P:regulation of DNA-templated transcription"/>
    <property type="evidence" value="ECO:0000315"/>
    <property type="project" value="RGD"/>
</dbReference>
<dbReference type="GO" id="GO:0072307">
    <property type="term" value="P:regulation of metanephric nephron tubule epithelial cell differentiation"/>
    <property type="evidence" value="ECO:0000250"/>
    <property type="project" value="UniProtKB"/>
</dbReference>
<dbReference type="GO" id="GO:2000612">
    <property type="term" value="P:regulation of thyroid-stimulating hormone secretion"/>
    <property type="evidence" value="ECO:0000250"/>
    <property type="project" value="UniProtKB"/>
</dbReference>
<dbReference type="GO" id="GO:0006357">
    <property type="term" value="P:regulation of transcription by RNA polymerase II"/>
    <property type="evidence" value="ECO:0000318"/>
    <property type="project" value="GO_Central"/>
</dbReference>
<dbReference type="GO" id="GO:0072050">
    <property type="term" value="P:S-shaped body morphogenesis"/>
    <property type="evidence" value="ECO:0000266"/>
    <property type="project" value="RGD"/>
</dbReference>
<dbReference type="GO" id="GO:0007423">
    <property type="term" value="P:sensory organ development"/>
    <property type="evidence" value="ECO:0000318"/>
    <property type="project" value="GO_Central"/>
</dbReference>
<dbReference type="GO" id="GO:0006790">
    <property type="term" value="P:sulfur compound metabolic process"/>
    <property type="evidence" value="ECO:0000270"/>
    <property type="project" value="RGD"/>
</dbReference>
<dbReference type="GO" id="GO:0030878">
    <property type="term" value="P:thyroid gland development"/>
    <property type="evidence" value="ECO:0000250"/>
    <property type="project" value="UniProtKB"/>
</dbReference>
<dbReference type="GO" id="GO:0001655">
    <property type="term" value="P:urogenital system development"/>
    <property type="evidence" value="ECO:0000250"/>
    <property type="project" value="UniProtKB"/>
</dbReference>
<dbReference type="GO" id="GO:0003281">
    <property type="term" value="P:ventricular septum development"/>
    <property type="evidence" value="ECO:0000266"/>
    <property type="project" value="RGD"/>
</dbReference>
<dbReference type="CDD" id="cd00131">
    <property type="entry name" value="PAX"/>
    <property type="match status" value="1"/>
</dbReference>
<dbReference type="FunFam" id="1.10.10.10:FF:000013">
    <property type="entry name" value="Paired box 8 isoform 1"/>
    <property type="match status" value="1"/>
</dbReference>
<dbReference type="FunFam" id="1.10.10.10:FF:000003">
    <property type="entry name" value="Paired box protein Pax-6"/>
    <property type="match status" value="1"/>
</dbReference>
<dbReference type="Gene3D" id="1.10.10.10">
    <property type="entry name" value="Winged helix-like DNA-binding domain superfamily/Winged helix DNA-binding domain"/>
    <property type="match status" value="2"/>
</dbReference>
<dbReference type="InterPro" id="IPR009057">
    <property type="entry name" value="Homeodomain-like_sf"/>
</dbReference>
<dbReference type="InterPro" id="IPR043182">
    <property type="entry name" value="PAIRED_DNA-bd_dom"/>
</dbReference>
<dbReference type="InterPro" id="IPR001523">
    <property type="entry name" value="Paired_dom"/>
</dbReference>
<dbReference type="InterPro" id="IPR022130">
    <property type="entry name" value="Pax2_C"/>
</dbReference>
<dbReference type="InterPro" id="IPR043565">
    <property type="entry name" value="PAX_fam"/>
</dbReference>
<dbReference type="InterPro" id="IPR036388">
    <property type="entry name" value="WH-like_DNA-bd_sf"/>
</dbReference>
<dbReference type="PANTHER" id="PTHR45636">
    <property type="entry name" value="PAIRED BOX PROTEIN PAX-6-RELATED-RELATED"/>
    <property type="match status" value="1"/>
</dbReference>
<dbReference type="PANTHER" id="PTHR45636:SF6">
    <property type="entry name" value="PAIRED BOX PROTEIN PAX-8"/>
    <property type="match status" value="1"/>
</dbReference>
<dbReference type="Pfam" id="PF00292">
    <property type="entry name" value="PAX"/>
    <property type="match status" value="1"/>
</dbReference>
<dbReference type="Pfam" id="PF12403">
    <property type="entry name" value="Pax2_C"/>
    <property type="match status" value="1"/>
</dbReference>
<dbReference type="PRINTS" id="PR00027">
    <property type="entry name" value="PAIREDBOX"/>
</dbReference>
<dbReference type="SMART" id="SM00351">
    <property type="entry name" value="PAX"/>
    <property type="match status" value="1"/>
</dbReference>
<dbReference type="SUPFAM" id="SSF46689">
    <property type="entry name" value="Homeodomain-like"/>
    <property type="match status" value="1"/>
</dbReference>
<dbReference type="PROSITE" id="PS00034">
    <property type="entry name" value="PAIRED_1"/>
    <property type="match status" value="1"/>
</dbReference>
<dbReference type="PROSITE" id="PS51057">
    <property type="entry name" value="PAIRED_2"/>
    <property type="match status" value="1"/>
</dbReference>
<feature type="chain" id="PRO_0000050199" description="Paired box protein Pax-8">
    <location>
        <begin position="1"/>
        <end position="457"/>
    </location>
</feature>
<feature type="DNA-binding region" description="Paired" evidence="3">
    <location>
        <begin position="9"/>
        <end position="135"/>
    </location>
</feature>
<feature type="region of interest" description="PAI subdomain" evidence="3">
    <location>
        <begin position="12"/>
        <end position="68"/>
    </location>
</feature>
<feature type="region of interest" description="RED subdomain" evidence="3">
    <location>
        <begin position="87"/>
        <end position="135"/>
    </location>
</feature>
<feature type="region of interest" description="Disordered" evidence="4">
    <location>
        <begin position="159"/>
        <end position="226"/>
    </location>
</feature>
<feature type="compositionally biased region" description="Polar residues" evidence="4">
    <location>
        <begin position="159"/>
        <end position="182"/>
    </location>
</feature>
<feature type="modified residue" description="Phosphoserine" evidence="2">
    <location>
        <position position="304"/>
    </location>
</feature>
<feature type="sequence conflict" description="In Ref. 1; CAA63930." evidence="5" ref="1">
    <original>N</original>
    <variation>H</variation>
    <location>
        <position position="183"/>
    </location>
</feature>
<feature type="sequence conflict" description="In Ref. 1; CAA63930." evidence="5" ref="1">
    <original>P</original>
    <variation>A</variation>
    <location>
        <position position="191"/>
    </location>
</feature>
<feature type="sequence conflict" description="In Ref. 1; CAA63930." evidence="5" ref="1">
    <original>NKRKM</original>
    <variation>THRGRC</variation>
    <location>
        <begin position="195"/>
        <end position="199"/>
    </location>
</feature>
<feature type="sequence conflict" description="In Ref. 1; CAA63930." evidence="5" ref="1">
    <original>DS</original>
    <variation>GQ</variation>
    <location>
        <begin position="205"/>
        <end position="206"/>
    </location>
</feature>
<feature type="sequence conflict" description="In Ref. 1; CAA63930." evidence="5" ref="1">
    <original>T</original>
    <variation>S</variation>
    <location>
        <position position="377"/>
    </location>
</feature>
<comment type="function">
    <text evidence="1">Thought to encode a transcription factor. It may have a role in kidney cell differentiation. May play a regulatory role in mammalian development (By similarity).</text>
</comment>
<comment type="subunit">
    <text evidence="1">Interacts with WWTR1.</text>
</comment>
<comment type="interaction">
    <interactant intactId="EBI-1223113">
        <id>P51974</id>
    </interactant>
    <interactant intactId="EBI-1223127">
        <id>P23441</id>
        <label>Nkx2-1</label>
    </interactant>
    <organismsDiffer>false</organismsDiffer>
    <experiments>5</experiments>
</comment>
<comment type="interaction">
    <interactant intactId="EBI-1223113">
        <id>P51974</id>
    </interactant>
    <interactant intactId="EBI-1223229">
        <id>Q8R478</id>
        <label>Wbp2</label>
    </interactant>
    <organismsDiffer>false</organismsDiffer>
    <experiments>4</experiments>
</comment>
<comment type="subcellular location">
    <subcellularLocation>
        <location>Nucleus</location>
    </subcellularLocation>
</comment>
<reference key="1">
    <citation type="submission" date="1995-12" db="EMBL/GenBank/DDBJ databases">
        <authorList>
            <person name="Zannini M."/>
        </authorList>
    </citation>
    <scope>NUCLEOTIDE SEQUENCE [MRNA]</scope>
    <source>
        <tissue>Thyroid</tissue>
    </source>
</reference>
<reference key="2">
    <citation type="journal article" date="2004" name="Genome Res.">
        <title>The status, quality, and expansion of the NIH full-length cDNA project: the Mammalian Gene Collection (MGC).</title>
        <authorList>
            <consortium name="The MGC Project Team"/>
        </authorList>
    </citation>
    <scope>NUCLEOTIDE SEQUENCE [LARGE SCALE MRNA]</scope>
    <source>
        <tissue>Kidney</tissue>
    </source>
</reference>
<organism>
    <name type="scientific">Rattus norvegicus</name>
    <name type="common">Rat</name>
    <dbReference type="NCBI Taxonomy" id="10116"/>
    <lineage>
        <taxon>Eukaryota</taxon>
        <taxon>Metazoa</taxon>
        <taxon>Chordata</taxon>
        <taxon>Craniata</taxon>
        <taxon>Vertebrata</taxon>
        <taxon>Euteleostomi</taxon>
        <taxon>Mammalia</taxon>
        <taxon>Eutheria</taxon>
        <taxon>Euarchontoglires</taxon>
        <taxon>Glires</taxon>
        <taxon>Rodentia</taxon>
        <taxon>Myomorpha</taxon>
        <taxon>Muroidea</taxon>
        <taxon>Muridae</taxon>
        <taxon>Murinae</taxon>
        <taxon>Rattus</taxon>
    </lineage>
</organism>
<evidence type="ECO:0000250" key="1"/>
<evidence type="ECO:0000250" key="2">
    <source>
        <dbReference type="UniProtKB" id="Q00288"/>
    </source>
</evidence>
<evidence type="ECO:0000255" key="3">
    <source>
        <dbReference type="PROSITE-ProRule" id="PRU00381"/>
    </source>
</evidence>
<evidence type="ECO:0000256" key="4">
    <source>
        <dbReference type="SAM" id="MobiDB-lite"/>
    </source>
</evidence>
<evidence type="ECO:0000305" key="5"/>
<proteinExistence type="evidence at protein level"/>
<accession>P51974</accession>
<accession>Q66HM8</accession>
<protein>
    <recommendedName>
        <fullName>Paired box protein Pax-8</fullName>
    </recommendedName>
</protein>
<sequence>MPHNSIRSGHGGLNQLGGAFVNGRPLPEVVRQRIVDLAHQGVRPCDISRQLRVSHGCVSKILGRYYETGSIRPGVIGGSKPKVATPKVVEKIGDYKRQNPTMFAWEIRDRLLAEGVCDNDTVPSVSSINRIIRTKVQQPFNLPMDSCVATKSLSPGHTLIPSSAVTPPESPQSDSLGSTYSINGLLGIAQPGSDNKRKMDDSDQDSCRLSIDSQSSSSGPRKHLRTDTFGQHHLEPLECPFERQHYPEAYASPSHTKGEQGLYPLPLLNSTLDDGKATLTPSNTPLGRNLSTHQTYPVVADPHSPYAIKQETPELSSSSSTPSSLSSSAFLDLQQVGSGGPAGASVPPFNAFSHAASVYGQFTGQALLSGREMVGPTLPGYPPHIPTSGQGSYASSAIAGMVAGSEYSGNAYSHTPYASYSEAWRFPNSSLLSSPYYYSSTTRPSAPPTSATAFDHL</sequence>
<name>PAX8_RAT</name>
<keyword id="KW-0217">Developmental protein</keyword>
<keyword id="KW-0221">Differentiation</keyword>
<keyword id="KW-0238">DNA-binding</keyword>
<keyword id="KW-0539">Nucleus</keyword>
<keyword id="KW-0563">Paired box</keyword>
<keyword id="KW-0597">Phosphoprotein</keyword>
<keyword id="KW-1185">Reference proteome</keyword>
<keyword id="KW-0804">Transcription</keyword>
<keyword id="KW-0805">Transcription regulation</keyword>